<comment type="function">
    <text evidence="1">DNA ligase that catalyzes the formation of phosphodiester linkages between 5'-phosphoryl and 3'-hydroxyl groups in double-stranded DNA using NAD as a coenzyme and as the energy source for the reaction. It is essential for DNA replication and repair of damaged DNA.</text>
</comment>
<comment type="catalytic activity">
    <reaction evidence="1">
        <text>NAD(+) + (deoxyribonucleotide)n-3'-hydroxyl + 5'-phospho-(deoxyribonucleotide)m = (deoxyribonucleotide)n+m + AMP + beta-nicotinamide D-nucleotide.</text>
        <dbReference type="EC" id="6.5.1.2"/>
    </reaction>
</comment>
<comment type="cofactor">
    <cofactor evidence="1">
        <name>Mg(2+)</name>
        <dbReference type="ChEBI" id="CHEBI:18420"/>
    </cofactor>
    <cofactor evidence="1">
        <name>Mn(2+)</name>
        <dbReference type="ChEBI" id="CHEBI:29035"/>
    </cofactor>
</comment>
<comment type="similarity">
    <text evidence="1">Belongs to the NAD-dependent DNA ligase family. LigA subfamily.</text>
</comment>
<proteinExistence type="inferred from homology"/>
<dbReference type="EC" id="6.5.1.2" evidence="1"/>
<dbReference type="EMBL" id="AM181176">
    <property type="protein sequence ID" value="CAY51325.1"/>
    <property type="molecule type" value="Genomic_DNA"/>
</dbReference>
<dbReference type="RefSeq" id="WP_015885324.1">
    <property type="nucleotide sequence ID" value="NC_012660.1"/>
</dbReference>
<dbReference type="SMR" id="C3JXX6"/>
<dbReference type="STRING" id="294.SRM1_01895"/>
<dbReference type="GeneID" id="93466194"/>
<dbReference type="PATRIC" id="fig|216595.4.peg.4723"/>
<dbReference type="eggNOG" id="COG0272">
    <property type="taxonomic scope" value="Bacteria"/>
</dbReference>
<dbReference type="HOGENOM" id="CLU_007764_2_1_6"/>
<dbReference type="OrthoDB" id="9759736at2"/>
<dbReference type="GO" id="GO:0005829">
    <property type="term" value="C:cytosol"/>
    <property type="evidence" value="ECO:0007669"/>
    <property type="project" value="TreeGrafter"/>
</dbReference>
<dbReference type="GO" id="GO:0003677">
    <property type="term" value="F:DNA binding"/>
    <property type="evidence" value="ECO:0007669"/>
    <property type="project" value="InterPro"/>
</dbReference>
<dbReference type="GO" id="GO:0003911">
    <property type="term" value="F:DNA ligase (NAD+) activity"/>
    <property type="evidence" value="ECO:0007669"/>
    <property type="project" value="UniProtKB-UniRule"/>
</dbReference>
<dbReference type="GO" id="GO:0046872">
    <property type="term" value="F:metal ion binding"/>
    <property type="evidence" value="ECO:0007669"/>
    <property type="project" value="UniProtKB-KW"/>
</dbReference>
<dbReference type="GO" id="GO:0006281">
    <property type="term" value="P:DNA repair"/>
    <property type="evidence" value="ECO:0007669"/>
    <property type="project" value="UniProtKB-KW"/>
</dbReference>
<dbReference type="GO" id="GO:0006260">
    <property type="term" value="P:DNA replication"/>
    <property type="evidence" value="ECO:0007669"/>
    <property type="project" value="UniProtKB-KW"/>
</dbReference>
<dbReference type="CDD" id="cd17748">
    <property type="entry name" value="BRCT_DNA_ligase_like"/>
    <property type="match status" value="1"/>
</dbReference>
<dbReference type="CDD" id="cd00114">
    <property type="entry name" value="LIGANc"/>
    <property type="match status" value="1"/>
</dbReference>
<dbReference type="FunFam" id="1.10.150.20:FF:000007">
    <property type="entry name" value="DNA ligase"/>
    <property type="match status" value="1"/>
</dbReference>
<dbReference type="FunFam" id="1.10.287.610:FF:000002">
    <property type="entry name" value="DNA ligase"/>
    <property type="match status" value="1"/>
</dbReference>
<dbReference type="FunFam" id="2.40.50.140:FF:000012">
    <property type="entry name" value="DNA ligase"/>
    <property type="match status" value="1"/>
</dbReference>
<dbReference type="FunFam" id="3.30.470.30:FF:000001">
    <property type="entry name" value="DNA ligase"/>
    <property type="match status" value="1"/>
</dbReference>
<dbReference type="Gene3D" id="6.20.10.30">
    <property type="match status" value="1"/>
</dbReference>
<dbReference type="Gene3D" id="1.10.150.20">
    <property type="entry name" value="5' to 3' exonuclease, C-terminal subdomain"/>
    <property type="match status" value="3"/>
</dbReference>
<dbReference type="Gene3D" id="3.40.50.10190">
    <property type="entry name" value="BRCT domain"/>
    <property type="match status" value="1"/>
</dbReference>
<dbReference type="Gene3D" id="3.30.470.30">
    <property type="entry name" value="DNA ligase/mRNA capping enzyme"/>
    <property type="match status" value="1"/>
</dbReference>
<dbReference type="Gene3D" id="1.10.287.610">
    <property type="entry name" value="Helix hairpin bin"/>
    <property type="match status" value="1"/>
</dbReference>
<dbReference type="Gene3D" id="2.40.50.140">
    <property type="entry name" value="Nucleic acid-binding proteins"/>
    <property type="match status" value="1"/>
</dbReference>
<dbReference type="HAMAP" id="MF_01588">
    <property type="entry name" value="DNA_ligase_A"/>
    <property type="match status" value="1"/>
</dbReference>
<dbReference type="InterPro" id="IPR001357">
    <property type="entry name" value="BRCT_dom"/>
</dbReference>
<dbReference type="InterPro" id="IPR036420">
    <property type="entry name" value="BRCT_dom_sf"/>
</dbReference>
<dbReference type="InterPro" id="IPR041663">
    <property type="entry name" value="DisA/LigA_HHH"/>
</dbReference>
<dbReference type="InterPro" id="IPR001679">
    <property type="entry name" value="DNA_ligase"/>
</dbReference>
<dbReference type="InterPro" id="IPR018239">
    <property type="entry name" value="DNA_ligase_AS"/>
</dbReference>
<dbReference type="InterPro" id="IPR033136">
    <property type="entry name" value="DNA_ligase_CS"/>
</dbReference>
<dbReference type="InterPro" id="IPR013839">
    <property type="entry name" value="DNAligase_adenylation"/>
</dbReference>
<dbReference type="InterPro" id="IPR013840">
    <property type="entry name" value="DNAligase_N"/>
</dbReference>
<dbReference type="InterPro" id="IPR003583">
    <property type="entry name" value="Hlx-hairpin-Hlx_DNA-bd_motif"/>
</dbReference>
<dbReference type="InterPro" id="IPR012340">
    <property type="entry name" value="NA-bd_OB-fold"/>
</dbReference>
<dbReference type="InterPro" id="IPR004150">
    <property type="entry name" value="NAD_DNA_ligase_OB"/>
</dbReference>
<dbReference type="InterPro" id="IPR010994">
    <property type="entry name" value="RuvA_2-like"/>
</dbReference>
<dbReference type="NCBIfam" id="TIGR00575">
    <property type="entry name" value="dnlj"/>
    <property type="match status" value="1"/>
</dbReference>
<dbReference type="NCBIfam" id="NF005932">
    <property type="entry name" value="PRK07956.1"/>
    <property type="match status" value="1"/>
</dbReference>
<dbReference type="PANTHER" id="PTHR23389">
    <property type="entry name" value="CHROMOSOME TRANSMISSION FIDELITY FACTOR 18"/>
    <property type="match status" value="1"/>
</dbReference>
<dbReference type="PANTHER" id="PTHR23389:SF9">
    <property type="entry name" value="DNA LIGASE"/>
    <property type="match status" value="1"/>
</dbReference>
<dbReference type="Pfam" id="PF00533">
    <property type="entry name" value="BRCT"/>
    <property type="match status" value="1"/>
</dbReference>
<dbReference type="Pfam" id="PF01653">
    <property type="entry name" value="DNA_ligase_aden"/>
    <property type="match status" value="1"/>
</dbReference>
<dbReference type="Pfam" id="PF03120">
    <property type="entry name" value="DNA_ligase_OB"/>
    <property type="match status" value="1"/>
</dbReference>
<dbReference type="Pfam" id="PF12826">
    <property type="entry name" value="HHH_2"/>
    <property type="match status" value="1"/>
</dbReference>
<dbReference type="Pfam" id="PF14520">
    <property type="entry name" value="HHH_5"/>
    <property type="match status" value="1"/>
</dbReference>
<dbReference type="Pfam" id="PF22745">
    <property type="entry name" value="Nlig-Ia"/>
    <property type="match status" value="1"/>
</dbReference>
<dbReference type="PIRSF" id="PIRSF001604">
    <property type="entry name" value="LigA"/>
    <property type="match status" value="1"/>
</dbReference>
<dbReference type="SMART" id="SM00292">
    <property type="entry name" value="BRCT"/>
    <property type="match status" value="1"/>
</dbReference>
<dbReference type="SMART" id="SM00278">
    <property type="entry name" value="HhH1"/>
    <property type="match status" value="2"/>
</dbReference>
<dbReference type="SMART" id="SM00532">
    <property type="entry name" value="LIGANc"/>
    <property type="match status" value="1"/>
</dbReference>
<dbReference type="SUPFAM" id="SSF52113">
    <property type="entry name" value="BRCT domain"/>
    <property type="match status" value="1"/>
</dbReference>
<dbReference type="SUPFAM" id="SSF56091">
    <property type="entry name" value="DNA ligase/mRNA capping enzyme, catalytic domain"/>
    <property type="match status" value="1"/>
</dbReference>
<dbReference type="SUPFAM" id="SSF50249">
    <property type="entry name" value="Nucleic acid-binding proteins"/>
    <property type="match status" value="1"/>
</dbReference>
<dbReference type="SUPFAM" id="SSF47781">
    <property type="entry name" value="RuvA domain 2-like"/>
    <property type="match status" value="2"/>
</dbReference>
<dbReference type="PROSITE" id="PS50172">
    <property type="entry name" value="BRCT"/>
    <property type="match status" value="1"/>
</dbReference>
<dbReference type="PROSITE" id="PS01055">
    <property type="entry name" value="DNA_LIGASE_N1"/>
    <property type="match status" value="1"/>
</dbReference>
<dbReference type="PROSITE" id="PS01056">
    <property type="entry name" value="DNA_LIGASE_N2"/>
    <property type="match status" value="1"/>
</dbReference>
<evidence type="ECO:0000255" key="1">
    <source>
        <dbReference type="HAMAP-Rule" id="MF_01588"/>
    </source>
</evidence>
<organism>
    <name type="scientific">Pseudomonas fluorescens (strain SBW25)</name>
    <dbReference type="NCBI Taxonomy" id="216595"/>
    <lineage>
        <taxon>Bacteria</taxon>
        <taxon>Pseudomonadati</taxon>
        <taxon>Pseudomonadota</taxon>
        <taxon>Gammaproteobacteria</taxon>
        <taxon>Pseudomonadales</taxon>
        <taxon>Pseudomonadaceae</taxon>
        <taxon>Pseudomonas</taxon>
    </lineage>
</organism>
<reference key="1">
    <citation type="journal article" date="2009" name="Genome Biol.">
        <title>Genomic and genetic analyses of diversity and plant interactions of Pseudomonas fluorescens.</title>
        <authorList>
            <person name="Silby M.W."/>
            <person name="Cerdeno-Tarraga A.M."/>
            <person name="Vernikos G.S."/>
            <person name="Giddens S.R."/>
            <person name="Jackson R.W."/>
            <person name="Preston G.M."/>
            <person name="Zhang X.-X."/>
            <person name="Moon C.D."/>
            <person name="Gehrig S.M."/>
            <person name="Godfrey S.A.C."/>
            <person name="Knight C.G."/>
            <person name="Malone J.G."/>
            <person name="Robinson Z."/>
            <person name="Spiers A.J."/>
            <person name="Harris S."/>
            <person name="Challis G.L."/>
            <person name="Yaxley A.M."/>
            <person name="Harris D."/>
            <person name="Seeger K."/>
            <person name="Murphy L."/>
            <person name="Rutter S."/>
            <person name="Squares R."/>
            <person name="Quail M.A."/>
            <person name="Saunders E."/>
            <person name="Mavromatis K."/>
            <person name="Brettin T.S."/>
            <person name="Bentley S.D."/>
            <person name="Hothersall J."/>
            <person name="Stephens E."/>
            <person name="Thomas C.M."/>
            <person name="Parkhill J."/>
            <person name="Levy S.B."/>
            <person name="Rainey P.B."/>
            <person name="Thomson N.R."/>
        </authorList>
    </citation>
    <scope>NUCLEOTIDE SEQUENCE [LARGE SCALE GENOMIC DNA]</scope>
    <source>
        <strain>SBW25</strain>
    </source>
</reference>
<name>DNLJ_PSEFS</name>
<gene>
    <name evidence="1" type="primary">ligA</name>
    <name type="ordered locus">PFLU_4588</name>
</gene>
<accession>C3JXX6</accession>
<protein>
    <recommendedName>
        <fullName evidence="1">DNA ligase</fullName>
        <ecNumber evidence="1">6.5.1.2</ecNumber>
    </recommendedName>
    <alternativeName>
        <fullName evidence="1">Polydeoxyribonucleotide synthase [NAD(+)]</fullName>
    </alternativeName>
</protein>
<keyword id="KW-0227">DNA damage</keyword>
<keyword id="KW-0234">DNA repair</keyword>
<keyword id="KW-0235">DNA replication</keyword>
<keyword id="KW-0436">Ligase</keyword>
<keyword id="KW-0460">Magnesium</keyword>
<keyword id="KW-0464">Manganese</keyword>
<keyword id="KW-0479">Metal-binding</keyword>
<keyword id="KW-0520">NAD</keyword>
<keyword id="KW-0862">Zinc</keyword>
<sequence>MTAAHTRILELRAELDQHNYRYHVLDEPSIPDAEYDRLFHELKALEAEHPDLVTRDSPTQRVGSAALSAFTQVKHDIPMLSLGNAFDETTMLEFDRRVTEGLDLPVGDLFGGGAAVEYSCEPKLDGLAVSLLYQDGELVRGATRGDGTTGEDISVNIRTVRNIPLKLHGSGWPATLEVRGEVFMSKAGFERLNASQLEVGGKTFANPRNAAAGSLRQLDSKITASRPLEFCCYGVTTDISDTHIGNLQQLKKWGMPISHELKLAKGIQDCLDYYRDIGERRNSLPYEIDGVVFKVNSIASQRELGFRAREPRWAIAHKFPAMEELTELLDVEFQVGRTGAVTPVARLKPVKVAGVTVSNATLHNMDEVARLGLMIGDTVIIRRAGDVIPQVVSVVPERRPENARAVQIPESCPVCGSHVERTQLVKRSKGKETVSEGAVYRCVGRLACGAQLKQAIIHFVSRRAMDIDGLGDKTIEQLVDEKLIGSPADLYTLKYEQIIDLEGFADISSKKLITAIENSKTPTLARFIYALGIPDVGEETAKVLARSLASLERVQKALPEVLTYLPDVGLEVAHEIHSFFEDSHNQDVIGALLSPQACGLQLQDQGELSAEFAASTTLGGLLDKLHVPSVGPGAAQKLADKFVTLEGVIKADWLDMRQALPEKQAKAVREFFDNADNANHALAIEQQLKDFGMHWDSEKKVVEGLPEAGHTWVLTGSLELMSRDVAKDKLESLGAKVAGSVSAKTHCVVAGPGAGSKLAKASELGLKVLDEEAFVAFLAKHNIPV</sequence>
<feature type="chain" id="PRO_0000380448" description="DNA ligase">
    <location>
        <begin position="1"/>
        <end position="785"/>
    </location>
</feature>
<feature type="domain" description="BRCT" evidence="1">
    <location>
        <begin position="702"/>
        <end position="785"/>
    </location>
</feature>
<feature type="active site" description="N6-AMP-lysine intermediate" evidence="1">
    <location>
        <position position="123"/>
    </location>
</feature>
<feature type="binding site" evidence="1">
    <location>
        <begin position="32"/>
        <end position="36"/>
    </location>
    <ligand>
        <name>NAD(+)</name>
        <dbReference type="ChEBI" id="CHEBI:57540"/>
    </ligand>
</feature>
<feature type="binding site" evidence="1">
    <location>
        <begin position="81"/>
        <end position="82"/>
    </location>
    <ligand>
        <name>NAD(+)</name>
        <dbReference type="ChEBI" id="CHEBI:57540"/>
    </ligand>
</feature>
<feature type="binding site" evidence="1">
    <location>
        <position position="121"/>
    </location>
    <ligand>
        <name>NAD(+)</name>
        <dbReference type="ChEBI" id="CHEBI:57540"/>
    </ligand>
</feature>
<feature type="binding site" evidence="1">
    <location>
        <position position="144"/>
    </location>
    <ligand>
        <name>NAD(+)</name>
        <dbReference type="ChEBI" id="CHEBI:57540"/>
    </ligand>
</feature>
<feature type="binding site" evidence="1">
    <location>
        <position position="181"/>
    </location>
    <ligand>
        <name>NAD(+)</name>
        <dbReference type="ChEBI" id="CHEBI:57540"/>
    </ligand>
</feature>
<feature type="binding site" evidence="1">
    <location>
        <position position="294"/>
    </location>
    <ligand>
        <name>NAD(+)</name>
        <dbReference type="ChEBI" id="CHEBI:57540"/>
    </ligand>
</feature>
<feature type="binding site" evidence="1">
    <location>
        <position position="318"/>
    </location>
    <ligand>
        <name>NAD(+)</name>
        <dbReference type="ChEBI" id="CHEBI:57540"/>
    </ligand>
</feature>
<feature type="binding site" evidence="1">
    <location>
        <position position="412"/>
    </location>
    <ligand>
        <name>Zn(2+)</name>
        <dbReference type="ChEBI" id="CHEBI:29105"/>
    </ligand>
</feature>
<feature type="binding site" evidence="1">
    <location>
        <position position="415"/>
    </location>
    <ligand>
        <name>Zn(2+)</name>
        <dbReference type="ChEBI" id="CHEBI:29105"/>
    </ligand>
</feature>
<feature type="binding site" evidence="1">
    <location>
        <position position="442"/>
    </location>
    <ligand>
        <name>Zn(2+)</name>
        <dbReference type="ChEBI" id="CHEBI:29105"/>
    </ligand>
</feature>
<feature type="binding site" evidence="1">
    <location>
        <position position="448"/>
    </location>
    <ligand>
        <name>Zn(2+)</name>
        <dbReference type="ChEBI" id="CHEBI:29105"/>
    </ligand>
</feature>